<reference key="1">
    <citation type="submission" date="2006-09" db="EMBL/GenBank/DDBJ databases">
        <authorList>
            <consortium name="The Klebsiella pneumonia Genome Sequencing Project"/>
            <person name="McClelland M."/>
            <person name="Sanderson E.K."/>
            <person name="Spieth J."/>
            <person name="Clifton W.S."/>
            <person name="Latreille P."/>
            <person name="Sabo A."/>
            <person name="Pepin K."/>
            <person name="Bhonagiri V."/>
            <person name="Porwollik S."/>
            <person name="Ali J."/>
            <person name="Wilson R.K."/>
        </authorList>
    </citation>
    <scope>NUCLEOTIDE SEQUENCE [LARGE SCALE GENOMIC DNA]</scope>
    <source>
        <strain>ATCC 700721 / MGH 78578</strain>
    </source>
</reference>
<comment type="function">
    <text evidence="1">This is one of the proteins that binds to the 5S RNA in the ribosome where it forms part of the central protuberance.</text>
</comment>
<comment type="subunit">
    <text evidence="1">Part of the 50S ribosomal subunit; part of the 5S rRNA/L5/L18/L25 subcomplex. Contacts the 5S rRNA. Binds to the 5S rRNA independently of L5 and L18.</text>
</comment>
<comment type="similarity">
    <text evidence="1">Belongs to the bacterial ribosomal protein bL25 family.</text>
</comment>
<name>RL25_KLEP7</name>
<protein>
    <recommendedName>
        <fullName evidence="1">Large ribosomal subunit protein bL25</fullName>
    </recommendedName>
    <alternativeName>
        <fullName evidence="2">50S ribosomal protein L25</fullName>
    </alternativeName>
</protein>
<proteinExistence type="inferred from homology"/>
<gene>
    <name evidence="1" type="primary">rplY</name>
    <name type="ordered locus">KPN78578_25750</name>
    <name type="ORF">KPN_02618</name>
</gene>
<dbReference type="EMBL" id="CP000647">
    <property type="protein sequence ID" value="ABR78036.1"/>
    <property type="molecule type" value="Genomic_DNA"/>
</dbReference>
<dbReference type="RefSeq" id="WP_004189006.1">
    <property type="nucleotide sequence ID" value="NC_009648.1"/>
</dbReference>
<dbReference type="SMR" id="A6TBR5"/>
<dbReference type="STRING" id="272620.KPN_02618"/>
<dbReference type="jPOST" id="A6TBR5"/>
<dbReference type="PaxDb" id="272620-KPN_02618"/>
<dbReference type="EnsemblBacteria" id="ABR78036">
    <property type="protein sequence ID" value="ABR78036"/>
    <property type="gene ID" value="KPN_02618"/>
</dbReference>
<dbReference type="KEGG" id="kpn:KPN_02618"/>
<dbReference type="HOGENOM" id="CLU_137946_0_0_6"/>
<dbReference type="Proteomes" id="UP000000265">
    <property type="component" value="Chromosome"/>
</dbReference>
<dbReference type="GO" id="GO:0022625">
    <property type="term" value="C:cytosolic large ribosomal subunit"/>
    <property type="evidence" value="ECO:0007669"/>
    <property type="project" value="TreeGrafter"/>
</dbReference>
<dbReference type="GO" id="GO:0008097">
    <property type="term" value="F:5S rRNA binding"/>
    <property type="evidence" value="ECO:0007669"/>
    <property type="project" value="InterPro"/>
</dbReference>
<dbReference type="GO" id="GO:0003735">
    <property type="term" value="F:structural constituent of ribosome"/>
    <property type="evidence" value="ECO:0007669"/>
    <property type="project" value="InterPro"/>
</dbReference>
<dbReference type="GO" id="GO:0006412">
    <property type="term" value="P:translation"/>
    <property type="evidence" value="ECO:0007669"/>
    <property type="project" value="UniProtKB-UniRule"/>
</dbReference>
<dbReference type="CDD" id="cd00495">
    <property type="entry name" value="Ribosomal_L25_TL5_CTC"/>
    <property type="match status" value="1"/>
</dbReference>
<dbReference type="FunFam" id="2.40.240.10:FF:000002">
    <property type="entry name" value="50S ribosomal protein L25"/>
    <property type="match status" value="1"/>
</dbReference>
<dbReference type="Gene3D" id="2.40.240.10">
    <property type="entry name" value="Ribosomal Protein L25, Chain P"/>
    <property type="match status" value="1"/>
</dbReference>
<dbReference type="HAMAP" id="MF_01336">
    <property type="entry name" value="Ribosomal_bL25"/>
    <property type="match status" value="1"/>
</dbReference>
<dbReference type="InterPro" id="IPR020056">
    <property type="entry name" value="Rbsml_bL25/Gln-tRNA_synth_N"/>
</dbReference>
<dbReference type="InterPro" id="IPR011035">
    <property type="entry name" value="Ribosomal_bL25/Gln-tRNA_synth"/>
</dbReference>
<dbReference type="InterPro" id="IPR020055">
    <property type="entry name" value="Ribosomal_bL25_short"/>
</dbReference>
<dbReference type="InterPro" id="IPR029751">
    <property type="entry name" value="Ribosomal_L25_dom"/>
</dbReference>
<dbReference type="InterPro" id="IPR020930">
    <property type="entry name" value="Ribosomal_uL5_bac-type"/>
</dbReference>
<dbReference type="NCBIfam" id="NF004612">
    <property type="entry name" value="PRK05943.1"/>
    <property type="match status" value="1"/>
</dbReference>
<dbReference type="PANTHER" id="PTHR33284">
    <property type="entry name" value="RIBOSOMAL PROTEIN L25/GLN-TRNA SYNTHETASE, ANTI-CODON-BINDING DOMAIN-CONTAINING PROTEIN"/>
    <property type="match status" value="1"/>
</dbReference>
<dbReference type="PANTHER" id="PTHR33284:SF1">
    <property type="entry name" value="RIBOSOMAL PROTEIN L25_GLN-TRNA SYNTHETASE, ANTI-CODON-BINDING DOMAIN-CONTAINING PROTEIN"/>
    <property type="match status" value="1"/>
</dbReference>
<dbReference type="Pfam" id="PF01386">
    <property type="entry name" value="Ribosomal_L25p"/>
    <property type="match status" value="1"/>
</dbReference>
<dbReference type="SUPFAM" id="SSF50715">
    <property type="entry name" value="Ribosomal protein L25-like"/>
    <property type="match status" value="1"/>
</dbReference>
<keyword id="KW-0687">Ribonucleoprotein</keyword>
<keyword id="KW-0689">Ribosomal protein</keyword>
<keyword id="KW-0694">RNA-binding</keyword>
<keyword id="KW-0699">rRNA-binding</keyword>
<evidence type="ECO:0000255" key="1">
    <source>
        <dbReference type="HAMAP-Rule" id="MF_01336"/>
    </source>
</evidence>
<evidence type="ECO:0000305" key="2"/>
<sequence>MFTINAEVRKEQGKGASRRLRAANKFPAIIYGGAAAPVAIELDHDKVWNMQDKAEFYSEVLTVVVDGKEEKVKVQAVQRHAFKPKLTHIDFVRA</sequence>
<organism>
    <name type="scientific">Klebsiella pneumoniae subsp. pneumoniae (strain ATCC 700721 / MGH 78578)</name>
    <dbReference type="NCBI Taxonomy" id="272620"/>
    <lineage>
        <taxon>Bacteria</taxon>
        <taxon>Pseudomonadati</taxon>
        <taxon>Pseudomonadota</taxon>
        <taxon>Gammaproteobacteria</taxon>
        <taxon>Enterobacterales</taxon>
        <taxon>Enterobacteriaceae</taxon>
        <taxon>Klebsiella/Raoultella group</taxon>
        <taxon>Klebsiella</taxon>
        <taxon>Klebsiella pneumoniae complex</taxon>
    </lineage>
</organism>
<accession>A6TBR5</accession>
<feature type="chain" id="PRO_1000052960" description="Large ribosomal subunit protein bL25">
    <location>
        <begin position="1"/>
        <end position="94"/>
    </location>
</feature>